<reference key="1">
    <citation type="journal article" date="1994" name="J. Steroid Biochem. Mol. Biol.">
        <title>The presence of two cytochrome P450 aldosterone synthase mRNAs in the hamster adrenal.</title>
        <authorList>
            <person name="Lehoux J.-G."/>
            <person name="Mason J.I."/>
            <person name="Bernard H."/>
            <person name="Ducharme L."/>
            <person name="Lehoux J."/>
            <person name="Veronneau S."/>
            <person name="Lefebvre A."/>
        </authorList>
    </citation>
    <scope>NUCLEOTIDE SEQUENCE [MRNA]</scope>
    <source>
        <tissue>Adrenal glomerulosa</tissue>
    </source>
</reference>
<reference key="2">
    <citation type="journal article" date="1997" name="DNA Cell Biol.">
        <title>Characterization of the hamster CYP11B2 gene encoding adrenal cytochrome P450 aldosterone synthase.</title>
        <authorList>
            <person name="Coulombe N."/>
            <person name="Lefebvre A."/>
            <person name="Lehoux J.-G."/>
        </authorList>
    </citation>
    <scope>NUCLEOTIDE SEQUENCE [GENOMIC DNA]</scope>
</reference>
<name>C11B2_MESAU</name>
<sequence>MALRAKADVWLARPWQCLPRTRALGTTAALAPNTLRPFEAIPQYSRNRWLKMLQILREEGQEGLHLEMHEAFRELGPIFRYSMGRTQVVSVMLPEDAEKLHQVESMHPRRMHLEPWVAHREHRGLSRGVFLLNGPEWRFNRLRLNPHVLSPKAVQKFVPMVDMVARDFLESLKKKVFQNARGSLTMDVQQSLFNYSIEASNFVLFGERLGLLGHDLSPASLTFIHALHSVFKTTPQLMFLPRSLTRWTSTRVWKEHFEAWDVISEYVNRCIRKVHQELRLGSPHTYSGIVAELMSQGALPLDAIRANSIELTAGSVDTTTFPLVMALFELARNPDVQQAVRQESLAAEASVAANPQRAMSDLPLLRAVLKETLRLYPVGGFLERILSSDLVLQNYHVPAGTLVLLYLYSMGRNPAVFPRPEHYLPQRWLERNGSFQHLTFGFGVRQCLGKRLAQVEMLLLLHHVLKSFRVETQEREDVRMVYRFVLAPSSSPLLTFRPVS</sequence>
<accession>Q64658</accession>
<protein>
    <recommendedName>
        <fullName>Cytochrome P450 11B2, mitochondrial</fullName>
    </recommendedName>
    <alternativeName>
        <fullName evidence="5">Aldosterone synthase</fullName>
        <shortName>ALDOS</shortName>
    </alternativeName>
    <alternativeName>
        <fullName>Aldosterone-synthesizing enzyme</fullName>
    </alternativeName>
    <alternativeName>
        <fullName>CYPXIB2</fullName>
    </alternativeName>
    <alternativeName>
        <fullName>Corticosterone 18-monooxygenase, CYP11B2</fullName>
        <ecNumber evidence="3">1.14.15.5</ecNumber>
    </alternativeName>
    <alternativeName>
        <fullName>Cytochrome P-450Aldo</fullName>
    </alternativeName>
    <alternativeName>
        <fullName>Cytochrome P-450C18</fullName>
    </alternativeName>
    <alternativeName>
        <fullName>Steroid 11-beta-hydroxylase, CYP11B2</fullName>
        <ecNumber evidence="3">1.14.15.4</ecNumber>
    </alternativeName>
    <alternativeName>
        <fullName>Steroid 18-hydroxylase</fullName>
    </alternativeName>
</protein>
<proteinExistence type="evidence at transcript level"/>
<evidence type="ECO:0000250" key="1"/>
<evidence type="ECO:0000250" key="2">
    <source>
        <dbReference type="UniProtKB" id="P14137"/>
    </source>
</evidence>
<evidence type="ECO:0000250" key="3">
    <source>
        <dbReference type="UniProtKB" id="P19099"/>
    </source>
</evidence>
<evidence type="ECO:0000250" key="4">
    <source>
        <dbReference type="UniProtKB" id="P30099"/>
    </source>
</evidence>
<evidence type="ECO:0000303" key="5">
    <source>
    </source>
</evidence>
<evidence type="ECO:0000305" key="6"/>
<organism>
    <name type="scientific">Mesocricetus auratus</name>
    <name type="common">Golden hamster</name>
    <dbReference type="NCBI Taxonomy" id="10036"/>
    <lineage>
        <taxon>Eukaryota</taxon>
        <taxon>Metazoa</taxon>
        <taxon>Chordata</taxon>
        <taxon>Craniata</taxon>
        <taxon>Vertebrata</taxon>
        <taxon>Euteleostomi</taxon>
        <taxon>Mammalia</taxon>
        <taxon>Eutheria</taxon>
        <taxon>Euarchontoglires</taxon>
        <taxon>Glires</taxon>
        <taxon>Rodentia</taxon>
        <taxon>Myomorpha</taxon>
        <taxon>Muroidea</taxon>
        <taxon>Cricetidae</taxon>
        <taxon>Cricetinae</taxon>
        <taxon>Mesocricetus</taxon>
    </lineage>
</organism>
<comment type="function">
    <text evidence="3">A cytochrome P450 monooxygenase that catalyzes the biosynthesis of aldosterone, the main mineralocorticoid in the human body responsible for salt and water homeostasis, thus involved in blood pressure regulation, arterial hypertension, and the development of heart failure. Catalyzes three sequential oxidative reactions of 11-deoxycorticosterone (21-hydroxyprogesterone), namely 11-beta hydroxylation, followed by two successive oxidations at C18 yielding 18-hydroxy and then 18-oxo intermediates (that would not leave the enzyme active site during the consecutive hydroxylation reactions), ending with the formation of aldosterone. Can also produce 18-hydroxycortisol and 18-oxocortisol, derived from successive oxidations of cortisol at C18, normally found at very low levels, but significantly increased in primary aldosteronism, the most common form of secondary hypertension. Mechanistically, uses molecular oxygen inserting one oxygen atom into a substrate and reducing the second into a water molecule. Two electrons are provided by NADPH via a two-protein mitochondrial transfer system comprising flavoprotein FDXR (adrenodoxin/ferredoxin reductase) and nonheme iron-sulfur protein FDX1 or FDX2 (adrenodoxin/ferredoxin). Could also be involved in the androgen metabolic pathway.</text>
</comment>
<comment type="catalytic activity">
    <reaction evidence="3">
        <text>a steroid + 2 reduced [adrenodoxin] + O2 + 2 H(+) = an 11beta-hydroxysteroid + 2 oxidized [adrenodoxin] + H2O</text>
        <dbReference type="Rhea" id="RHEA:15629"/>
        <dbReference type="Rhea" id="RHEA-COMP:9998"/>
        <dbReference type="Rhea" id="RHEA-COMP:9999"/>
        <dbReference type="ChEBI" id="CHEBI:15377"/>
        <dbReference type="ChEBI" id="CHEBI:15378"/>
        <dbReference type="ChEBI" id="CHEBI:15379"/>
        <dbReference type="ChEBI" id="CHEBI:33737"/>
        <dbReference type="ChEBI" id="CHEBI:33738"/>
        <dbReference type="ChEBI" id="CHEBI:35341"/>
        <dbReference type="ChEBI" id="CHEBI:35346"/>
        <dbReference type="EC" id="1.14.15.4"/>
    </reaction>
    <physiologicalReaction direction="left-to-right" evidence="3">
        <dbReference type="Rhea" id="RHEA:15630"/>
    </physiologicalReaction>
</comment>
<comment type="catalytic activity">
    <reaction evidence="3">
        <text>21-hydroxyprogesterone + 2 reduced [adrenodoxin] + O2 + 2 H(+) = corticosterone + 2 oxidized [adrenodoxin] + H2O</text>
        <dbReference type="Rhea" id="RHEA:46104"/>
        <dbReference type="Rhea" id="RHEA-COMP:9998"/>
        <dbReference type="Rhea" id="RHEA-COMP:9999"/>
        <dbReference type="ChEBI" id="CHEBI:15377"/>
        <dbReference type="ChEBI" id="CHEBI:15378"/>
        <dbReference type="ChEBI" id="CHEBI:15379"/>
        <dbReference type="ChEBI" id="CHEBI:16827"/>
        <dbReference type="ChEBI" id="CHEBI:16973"/>
        <dbReference type="ChEBI" id="CHEBI:33737"/>
        <dbReference type="ChEBI" id="CHEBI:33738"/>
    </reaction>
    <physiologicalReaction direction="left-to-right" evidence="3">
        <dbReference type="Rhea" id="RHEA:46105"/>
    </physiologicalReaction>
</comment>
<comment type="catalytic activity">
    <reaction evidence="3">
        <text>corticosterone + 2 reduced [adrenodoxin] + O2 + 2 H(+) = 18-hydroxycorticosterone + 2 oxidized [adrenodoxin] + H2O</text>
        <dbReference type="Rhea" id="RHEA:11872"/>
        <dbReference type="Rhea" id="RHEA-COMP:9998"/>
        <dbReference type="Rhea" id="RHEA-COMP:9999"/>
        <dbReference type="ChEBI" id="CHEBI:15377"/>
        <dbReference type="ChEBI" id="CHEBI:15378"/>
        <dbReference type="ChEBI" id="CHEBI:15379"/>
        <dbReference type="ChEBI" id="CHEBI:16485"/>
        <dbReference type="ChEBI" id="CHEBI:16827"/>
        <dbReference type="ChEBI" id="CHEBI:33737"/>
        <dbReference type="ChEBI" id="CHEBI:33738"/>
        <dbReference type="EC" id="1.14.15.5"/>
    </reaction>
    <physiologicalReaction direction="left-to-right" evidence="3">
        <dbReference type="Rhea" id="RHEA:11873"/>
    </physiologicalReaction>
</comment>
<comment type="catalytic activity">
    <reaction evidence="3">
        <text>18-hydroxycorticosterone + 2 reduced [adrenodoxin] + O2 + 2 H(+) = aldosterone + 2 oxidized [adrenodoxin] + 2 H2O</text>
        <dbReference type="Rhea" id="RHEA:50792"/>
        <dbReference type="Rhea" id="RHEA-COMP:9998"/>
        <dbReference type="Rhea" id="RHEA-COMP:9999"/>
        <dbReference type="ChEBI" id="CHEBI:15377"/>
        <dbReference type="ChEBI" id="CHEBI:15378"/>
        <dbReference type="ChEBI" id="CHEBI:15379"/>
        <dbReference type="ChEBI" id="CHEBI:16485"/>
        <dbReference type="ChEBI" id="CHEBI:27584"/>
        <dbReference type="ChEBI" id="CHEBI:33737"/>
        <dbReference type="ChEBI" id="CHEBI:33738"/>
    </reaction>
    <physiologicalReaction direction="left-to-right" evidence="3">
        <dbReference type="Rhea" id="RHEA:50793"/>
    </physiologicalReaction>
</comment>
<comment type="catalytic activity">
    <reaction evidence="3">
        <text>11-deoxycortisol + 2 reduced [adrenodoxin] + O2 + 2 H(+) = cortisol + 2 oxidized [adrenodoxin] + H2O</text>
        <dbReference type="Rhea" id="RHEA:46100"/>
        <dbReference type="Rhea" id="RHEA-COMP:9998"/>
        <dbReference type="Rhea" id="RHEA-COMP:9999"/>
        <dbReference type="ChEBI" id="CHEBI:15377"/>
        <dbReference type="ChEBI" id="CHEBI:15378"/>
        <dbReference type="ChEBI" id="CHEBI:15379"/>
        <dbReference type="ChEBI" id="CHEBI:17650"/>
        <dbReference type="ChEBI" id="CHEBI:28324"/>
        <dbReference type="ChEBI" id="CHEBI:33737"/>
        <dbReference type="ChEBI" id="CHEBI:33738"/>
    </reaction>
    <physiologicalReaction direction="left-to-right" evidence="3">
        <dbReference type="Rhea" id="RHEA:46101"/>
    </physiologicalReaction>
</comment>
<comment type="catalytic activity">
    <reaction evidence="4">
        <text>21-hydroxyprogesterone + 2 reduced [adrenodoxin] + O2 + 2 H(+) = 18-hydroxy-11-deoxycorticosterone + 2 oxidized [adrenodoxin] + H2O</text>
        <dbReference type="Rhea" id="RHEA:76151"/>
        <dbReference type="Rhea" id="RHEA-COMP:9998"/>
        <dbReference type="Rhea" id="RHEA-COMP:9999"/>
        <dbReference type="ChEBI" id="CHEBI:15377"/>
        <dbReference type="ChEBI" id="CHEBI:15378"/>
        <dbReference type="ChEBI" id="CHEBI:15379"/>
        <dbReference type="ChEBI" id="CHEBI:16973"/>
        <dbReference type="ChEBI" id="CHEBI:33737"/>
        <dbReference type="ChEBI" id="CHEBI:33738"/>
        <dbReference type="ChEBI" id="CHEBI:195166"/>
    </reaction>
    <physiologicalReaction direction="left-to-right" evidence="4">
        <dbReference type="Rhea" id="RHEA:76152"/>
    </physiologicalReaction>
</comment>
<comment type="catalytic activity">
    <reaction evidence="3">
        <text>cortisol + 2 reduced [adrenodoxin] + O2 + 2 H(+) = 18-hydroxycortisol + 2 oxidized [adrenodoxin] + H2O</text>
        <dbReference type="Rhea" id="RHEA:76019"/>
        <dbReference type="Rhea" id="RHEA-COMP:9998"/>
        <dbReference type="Rhea" id="RHEA-COMP:9999"/>
        <dbReference type="ChEBI" id="CHEBI:15377"/>
        <dbReference type="ChEBI" id="CHEBI:15378"/>
        <dbReference type="ChEBI" id="CHEBI:15379"/>
        <dbReference type="ChEBI" id="CHEBI:17650"/>
        <dbReference type="ChEBI" id="CHEBI:33737"/>
        <dbReference type="ChEBI" id="CHEBI:33738"/>
        <dbReference type="ChEBI" id="CHEBI:89455"/>
    </reaction>
    <physiologicalReaction direction="left-to-right" evidence="3">
        <dbReference type="Rhea" id="RHEA:76020"/>
    </physiologicalReaction>
</comment>
<comment type="catalytic activity">
    <reaction evidence="3">
        <text>18-hydroxycortisol + 2 reduced [adrenodoxin] + O2 + 2 H(+) = 18-oxocortisol + 2 oxidized [adrenodoxin] + 2 H2O</text>
        <dbReference type="Rhea" id="RHEA:76023"/>
        <dbReference type="Rhea" id="RHEA-COMP:9998"/>
        <dbReference type="Rhea" id="RHEA-COMP:9999"/>
        <dbReference type="ChEBI" id="CHEBI:15377"/>
        <dbReference type="ChEBI" id="CHEBI:15378"/>
        <dbReference type="ChEBI" id="CHEBI:15379"/>
        <dbReference type="ChEBI" id="CHEBI:33737"/>
        <dbReference type="ChEBI" id="CHEBI:33738"/>
        <dbReference type="ChEBI" id="CHEBI:89213"/>
        <dbReference type="ChEBI" id="CHEBI:89455"/>
    </reaction>
    <physiologicalReaction direction="left-to-right" evidence="3">
        <dbReference type="Rhea" id="RHEA:76024"/>
    </physiologicalReaction>
</comment>
<comment type="cofactor">
    <cofactor evidence="3">
        <name>heme</name>
        <dbReference type="ChEBI" id="CHEBI:30413"/>
    </cofactor>
</comment>
<comment type="pathway">
    <text evidence="3">Steroid biosynthesis.</text>
</comment>
<comment type="subcellular location">
    <subcellularLocation>
        <location evidence="2">Mitochondrion inner membrane</location>
        <topology evidence="2">Peripheral membrane protein</topology>
    </subcellularLocation>
</comment>
<comment type="tissue specificity">
    <text>Adrenal gland.</text>
</comment>
<comment type="induction">
    <text>By low sodium intake.</text>
</comment>
<comment type="similarity">
    <text evidence="6">Belongs to the cytochrome P450 family.</text>
</comment>
<gene>
    <name type="primary">CYP11B2</name>
</gene>
<dbReference type="EC" id="1.14.15.5" evidence="3"/>
<dbReference type="EC" id="1.14.15.4" evidence="3"/>
<dbReference type="EMBL" id="S73810">
    <property type="protein sequence ID" value="AAB31349.1"/>
    <property type="molecule type" value="mRNA"/>
</dbReference>
<dbReference type="EMBL" id="U71280">
    <property type="protein sequence ID" value="AAB16805.1"/>
    <property type="molecule type" value="Genomic_DNA"/>
</dbReference>
<dbReference type="SMR" id="Q64658"/>
<dbReference type="eggNOG" id="KOG0159">
    <property type="taxonomic scope" value="Eukaryota"/>
</dbReference>
<dbReference type="Proteomes" id="UP000189706">
    <property type="component" value="Unplaced"/>
</dbReference>
<dbReference type="GO" id="GO:0005743">
    <property type="term" value="C:mitochondrial inner membrane"/>
    <property type="evidence" value="ECO:0007669"/>
    <property type="project" value="UniProtKB-SubCell"/>
</dbReference>
<dbReference type="GO" id="GO:0047783">
    <property type="term" value="F:corticosterone 18-monooxygenase activity"/>
    <property type="evidence" value="ECO:0007669"/>
    <property type="project" value="UniProtKB-EC"/>
</dbReference>
<dbReference type="GO" id="GO:0020037">
    <property type="term" value="F:heme binding"/>
    <property type="evidence" value="ECO:0000250"/>
    <property type="project" value="UniProtKB"/>
</dbReference>
<dbReference type="GO" id="GO:0005506">
    <property type="term" value="F:iron ion binding"/>
    <property type="evidence" value="ECO:0007669"/>
    <property type="project" value="InterPro"/>
</dbReference>
<dbReference type="GO" id="GO:0004507">
    <property type="term" value="F:steroid 11-beta-monooxygenase activity"/>
    <property type="evidence" value="ECO:0000250"/>
    <property type="project" value="UniProtKB"/>
</dbReference>
<dbReference type="GO" id="GO:0032342">
    <property type="term" value="P:aldosterone biosynthetic process"/>
    <property type="evidence" value="ECO:0000250"/>
    <property type="project" value="UniProtKB"/>
</dbReference>
<dbReference type="GO" id="GO:0071375">
    <property type="term" value="P:cellular response to peptide hormone stimulus"/>
    <property type="evidence" value="ECO:0007669"/>
    <property type="project" value="TreeGrafter"/>
</dbReference>
<dbReference type="GO" id="GO:0008203">
    <property type="term" value="P:cholesterol metabolic process"/>
    <property type="evidence" value="ECO:0007669"/>
    <property type="project" value="TreeGrafter"/>
</dbReference>
<dbReference type="GO" id="GO:0034650">
    <property type="term" value="P:cortisol metabolic process"/>
    <property type="evidence" value="ECO:0007669"/>
    <property type="project" value="TreeGrafter"/>
</dbReference>
<dbReference type="GO" id="GO:0006704">
    <property type="term" value="P:glucocorticoid biosynthetic process"/>
    <property type="evidence" value="ECO:0007669"/>
    <property type="project" value="TreeGrafter"/>
</dbReference>
<dbReference type="FunFam" id="1.10.630.10:FF:000015">
    <property type="entry name" value="Cholesterol side-chain cleavage enzyme, mitochondrial"/>
    <property type="match status" value="1"/>
</dbReference>
<dbReference type="Gene3D" id="1.10.630.10">
    <property type="entry name" value="Cytochrome P450"/>
    <property type="match status" value="1"/>
</dbReference>
<dbReference type="InterPro" id="IPR050479">
    <property type="entry name" value="CYP11_CYP27_families"/>
</dbReference>
<dbReference type="InterPro" id="IPR001128">
    <property type="entry name" value="Cyt_P450"/>
</dbReference>
<dbReference type="InterPro" id="IPR017972">
    <property type="entry name" value="Cyt_P450_CS"/>
</dbReference>
<dbReference type="InterPro" id="IPR002399">
    <property type="entry name" value="Cyt_P450_mitochondrial"/>
</dbReference>
<dbReference type="InterPro" id="IPR036396">
    <property type="entry name" value="Cyt_P450_sf"/>
</dbReference>
<dbReference type="PANTHER" id="PTHR24279">
    <property type="entry name" value="CYTOCHROME P450"/>
    <property type="match status" value="1"/>
</dbReference>
<dbReference type="PANTHER" id="PTHR24279:SF1">
    <property type="entry name" value="CYTOCHROME P450 11B2, MITOCHONDRIAL"/>
    <property type="match status" value="1"/>
</dbReference>
<dbReference type="Pfam" id="PF00067">
    <property type="entry name" value="p450"/>
    <property type="match status" value="1"/>
</dbReference>
<dbReference type="PRINTS" id="PR00408">
    <property type="entry name" value="MITP450"/>
</dbReference>
<dbReference type="PRINTS" id="PR00385">
    <property type="entry name" value="P450"/>
</dbReference>
<dbReference type="SUPFAM" id="SSF48264">
    <property type="entry name" value="Cytochrome P450"/>
    <property type="match status" value="1"/>
</dbReference>
<dbReference type="PROSITE" id="PS00086">
    <property type="entry name" value="CYTOCHROME_P450"/>
    <property type="match status" value="1"/>
</dbReference>
<keyword id="KW-0349">Heme</keyword>
<keyword id="KW-0408">Iron</keyword>
<keyword id="KW-0472">Membrane</keyword>
<keyword id="KW-0479">Metal-binding</keyword>
<keyword id="KW-0496">Mitochondrion</keyword>
<keyword id="KW-0999">Mitochondrion inner membrane</keyword>
<keyword id="KW-0503">Monooxygenase</keyword>
<keyword id="KW-0560">Oxidoreductase</keyword>
<keyword id="KW-1185">Reference proteome</keyword>
<keyword id="KW-0755">Steroidogenesis</keyword>
<keyword id="KW-0809">Transit peptide</keyword>
<feature type="transit peptide" description="Mitochondrion" evidence="1">
    <location>
        <begin position="1"/>
        <end position="24"/>
    </location>
</feature>
<feature type="chain" id="PRO_0000003599" description="Cytochrome P450 11B2, mitochondrial">
    <location>
        <begin position="25"/>
        <end position="500"/>
    </location>
</feature>
<feature type="binding site" evidence="3">
    <location>
        <position position="381"/>
    </location>
    <ligand>
        <name>21-hydroxyprogesterone</name>
        <dbReference type="ChEBI" id="CHEBI:16973"/>
    </ligand>
</feature>
<feature type="binding site" description="axial binding residue" evidence="3">
    <location>
        <position position="447"/>
    </location>
    <ligand>
        <name>heme</name>
        <dbReference type="ChEBI" id="CHEBI:30413"/>
    </ligand>
    <ligandPart>
        <name>Fe</name>
        <dbReference type="ChEBI" id="CHEBI:18248"/>
    </ligandPart>
</feature>